<dbReference type="EMBL" id="AE000782">
    <property type="protein sequence ID" value="AAB90019.1"/>
    <property type="molecule type" value="Genomic_DNA"/>
</dbReference>
<dbReference type="PIR" id="C69404">
    <property type="entry name" value="C69404"/>
</dbReference>
<dbReference type="STRING" id="224325.AF_1236"/>
<dbReference type="PaxDb" id="224325-AF_1236"/>
<dbReference type="EnsemblBacteria" id="AAB90019">
    <property type="protein sequence ID" value="AAB90019"/>
    <property type="gene ID" value="AF_1236"/>
</dbReference>
<dbReference type="KEGG" id="afu:AF_1236"/>
<dbReference type="HOGENOM" id="CLU_1536569_0_0_2"/>
<dbReference type="Proteomes" id="UP000002199">
    <property type="component" value="Chromosome"/>
</dbReference>
<feature type="chain" id="PRO_0000127976" description="Uncharacterized protein AF_1236">
    <location>
        <begin position="1"/>
        <end position="174"/>
    </location>
</feature>
<gene>
    <name type="ordered locus">AF_1236</name>
</gene>
<name>Y1236_ARCFU</name>
<organism>
    <name type="scientific">Archaeoglobus fulgidus (strain ATCC 49558 / DSM 4304 / JCM 9628 / NBRC 100126 / VC-16)</name>
    <dbReference type="NCBI Taxonomy" id="224325"/>
    <lineage>
        <taxon>Archaea</taxon>
        <taxon>Methanobacteriati</taxon>
        <taxon>Methanobacteriota</taxon>
        <taxon>Archaeoglobi</taxon>
        <taxon>Archaeoglobales</taxon>
        <taxon>Archaeoglobaceae</taxon>
        <taxon>Archaeoglobus</taxon>
    </lineage>
</organism>
<reference key="1">
    <citation type="journal article" date="1997" name="Nature">
        <title>The complete genome sequence of the hyperthermophilic, sulphate-reducing archaeon Archaeoglobus fulgidus.</title>
        <authorList>
            <person name="Klenk H.-P."/>
            <person name="Clayton R.A."/>
            <person name="Tomb J.-F."/>
            <person name="White O."/>
            <person name="Nelson K.E."/>
            <person name="Ketchum K.A."/>
            <person name="Dodson R.J."/>
            <person name="Gwinn M.L."/>
            <person name="Hickey E.K."/>
            <person name="Peterson J.D."/>
            <person name="Richardson D.L."/>
            <person name="Kerlavage A.R."/>
            <person name="Graham D.E."/>
            <person name="Kyrpides N.C."/>
            <person name="Fleischmann R.D."/>
            <person name="Quackenbush J."/>
            <person name="Lee N.H."/>
            <person name="Sutton G.G."/>
            <person name="Gill S.R."/>
            <person name="Kirkness E.F."/>
            <person name="Dougherty B.A."/>
            <person name="McKenney K."/>
            <person name="Adams M.D."/>
            <person name="Loftus B.J."/>
            <person name="Peterson S.N."/>
            <person name="Reich C.I."/>
            <person name="McNeil L.K."/>
            <person name="Badger J.H."/>
            <person name="Glodek A."/>
            <person name="Zhou L."/>
            <person name="Overbeek R."/>
            <person name="Gocayne J.D."/>
            <person name="Weidman J.F."/>
            <person name="McDonald L.A."/>
            <person name="Utterback T.R."/>
            <person name="Cotton M.D."/>
            <person name="Spriggs T."/>
            <person name="Artiach P."/>
            <person name="Kaine B.P."/>
            <person name="Sykes S.M."/>
            <person name="Sadow P.W."/>
            <person name="D'Andrea K.P."/>
            <person name="Bowman C."/>
            <person name="Fujii C."/>
            <person name="Garland S.A."/>
            <person name="Mason T.M."/>
            <person name="Olsen G.J."/>
            <person name="Fraser C.M."/>
            <person name="Smith H.O."/>
            <person name="Woese C.R."/>
            <person name="Venter J.C."/>
        </authorList>
    </citation>
    <scope>NUCLEOTIDE SEQUENCE [LARGE SCALE GENOMIC DNA]</scope>
    <source>
        <strain>ATCC 49558 / DSM 4304 / JCM 9628 / NBRC 100126 / VC-16</strain>
    </source>
</reference>
<keyword id="KW-1185">Reference proteome</keyword>
<sequence length="174" mass="19226">MAVEAEQCLFLGLDSVVDLHVSHVKNRLARFVGHSSVLCPSCHRHGYVSSCKGNSSLYWNGDPILLAVGDYCNMNFERVNLCIAILLRGCGLHVVNCSNNLSTSCLDLRSLILSSDLLHDLTYWNWLNRCREDVNLPISVVPGVAGLEVVEEVPLAVIATFRVRNRELPPLLLG</sequence>
<accession>O29032</accession>
<proteinExistence type="predicted"/>
<protein>
    <recommendedName>
        <fullName>Uncharacterized protein AF_1236</fullName>
    </recommendedName>
</protein>